<accession>Q042P7</accession>
<comment type="function">
    <text evidence="1">Catalyzes the initial step of the lipid cycle reactions in the biosynthesis of the cell wall peptidoglycan: transfers peptidoglycan precursor phospho-MurNAc-pentapeptide from UDP-MurNAc-pentapeptide onto the lipid carrier undecaprenyl phosphate, yielding undecaprenyl-pyrophosphoryl-MurNAc-pentapeptide, known as lipid I.</text>
</comment>
<comment type="catalytic activity">
    <reaction evidence="1">
        <text>UDP-N-acetyl-alpha-D-muramoyl-L-alanyl-gamma-D-glutamyl-L-lysyl-D-alanyl-D-alanine + di-trans,octa-cis-undecaprenyl phosphate = Mur2Ac(oyl-L-Ala-gamma-D-Glu-L-Lys-D-Ala-D-Ala)-di-trans,octa-cis-undecaprenyl diphosphate + UMP</text>
        <dbReference type="Rhea" id="RHEA:21920"/>
        <dbReference type="ChEBI" id="CHEBI:57865"/>
        <dbReference type="ChEBI" id="CHEBI:60032"/>
        <dbReference type="ChEBI" id="CHEBI:60392"/>
        <dbReference type="ChEBI" id="CHEBI:70758"/>
        <dbReference type="EC" id="2.7.8.13"/>
    </reaction>
</comment>
<comment type="cofactor">
    <cofactor evidence="1">
        <name>Mg(2+)</name>
        <dbReference type="ChEBI" id="CHEBI:18420"/>
    </cofactor>
</comment>
<comment type="pathway">
    <text evidence="1">Cell wall biogenesis; peptidoglycan biosynthesis.</text>
</comment>
<comment type="subcellular location">
    <subcellularLocation>
        <location evidence="1">Cell membrane</location>
        <topology evidence="1">Multi-pass membrane protein</topology>
    </subcellularLocation>
</comment>
<comment type="similarity">
    <text evidence="1">Belongs to the glycosyltransferase 4 family. MraY subfamily.</text>
</comment>
<keyword id="KW-0131">Cell cycle</keyword>
<keyword id="KW-0132">Cell division</keyword>
<keyword id="KW-1003">Cell membrane</keyword>
<keyword id="KW-0133">Cell shape</keyword>
<keyword id="KW-0961">Cell wall biogenesis/degradation</keyword>
<keyword id="KW-0460">Magnesium</keyword>
<keyword id="KW-0472">Membrane</keyword>
<keyword id="KW-0479">Metal-binding</keyword>
<keyword id="KW-0573">Peptidoglycan synthesis</keyword>
<keyword id="KW-0808">Transferase</keyword>
<keyword id="KW-0812">Transmembrane</keyword>
<keyword id="KW-1133">Transmembrane helix</keyword>
<proteinExistence type="inferred from homology"/>
<reference key="1">
    <citation type="journal article" date="2006" name="Proc. Natl. Acad. Sci. U.S.A.">
        <title>Comparative genomics of the lactic acid bacteria.</title>
        <authorList>
            <person name="Makarova K.S."/>
            <person name="Slesarev A."/>
            <person name="Wolf Y.I."/>
            <person name="Sorokin A."/>
            <person name="Mirkin B."/>
            <person name="Koonin E.V."/>
            <person name="Pavlov A."/>
            <person name="Pavlova N."/>
            <person name="Karamychev V."/>
            <person name="Polouchine N."/>
            <person name="Shakhova V."/>
            <person name="Grigoriev I."/>
            <person name="Lou Y."/>
            <person name="Rohksar D."/>
            <person name="Lucas S."/>
            <person name="Huang K."/>
            <person name="Goodstein D.M."/>
            <person name="Hawkins T."/>
            <person name="Plengvidhya V."/>
            <person name="Welker D."/>
            <person name="Hughes J."/>
            <person name="Goh Y."/>
            <person name="Benson A."/>
            <person name="Baldwin K."/>
            <person name="Lee J.-H."/>
            <person name="Diaz-Muniz I."/>
            <person name="Dosti B."/>
            <person name="Smeianov V."/>
            <person name="Wechter W."/>
            <person name="Barabote R."/>
            <person name="Lorca G."/>
            <person name="Altermann E."/>
            <person name="Barrangou R."/>
            <person name="Ganesan B."/>
            <person name="Xie Y."/>
            <person name="Rawsthorne H."/>
            <person name="Tamir D."/>
            <person name="Parker C."/>
            <person name="Breidt F."/>
            <person name="Broadbent J.R."/>
            <person name="Hutkins R."/>
            <person name="O'Sullivan D."/>
            <person name="Steele J."/>
            <person name="Unlu G."/>
            <person name="Saier M.H. Jr."/>
            <person name="Klaenhammer T."/>
            <person name="Richardson P."/>
            <person name="Kozyavkin S."/>
            <person name="Weimer B.C."/>
            <person name="Mills D.A."/>
        </authorList>
    </citation>
    <scope>NUCLEOTIDE SEQUENCE [LARGE SCALE GENOMIC DNA]</scope>
    <source>
        <strain>ATCC 33323 / DSM 20243 / BCRC 14619 / CIP 102991 / JCM 1131 / KCTC 3163 / NCIMB 11718 / NCTC 13722 / AM63</strain>
    </source>
</reference>
<dbReference type="EC" id="2.7.8.13" evidence="1"/>
<dbReference type="EMBL" id="CP000413">
    <property type="protein sequence ID" value="ABJ60575.1"/>
    <property type="molecule type" value="Genomic_DNA"/>
</dbReference>
<dbReference type="RefSeq" id="WP_003657218.1">
    <property type="nucleotide sequence ID" value="NZ_WBMG01000002.1"/>
</dbReference>
<dbReference type="SMR" id="Q042P7"/>
<dbReference type="GeneID" id="29639767"/>
<dbReference type="KEGG" id="lga:LGAS_1206"/>
<dbReference type="HOGENOM" id="CLU_023982_0_1_9"/>
<dbReference type="BioCyc" id="LGAS324831:G1G6Y-1202-MONOMER"/>
<dbReference type="UniPathway" id="UPA00219"/>
<dbReference type="Proteomes" id="UP000000664">
    <property type="component" value="Chromosome"/>
</dbReference>
<dbReference type="GO" id="GO:0005886">
    <property type="term" value="C:plasma membrane"/>
    <property type="evidence" value="ECO:0007669"/>
    <property type="project" value="UniProtKB-SubCell"/>
</dbReference>
<dbReference type="GO" id="GO:0046872">
    <property type="term" value="F:metal ion binding"/>
    <property type="evidence" value="ECO:0007669"/>
    <property type="project" value="UniProtKB-KW"/>
</dbReference>
<dbReference type="GO" id="GO:0008963">
    <property type="term" value="F:phospho-N-acetylmuramoyl-pentapeptide-transferase activity"/>
    <property type="evidence" value="ECO:0007669"/>
    <property type="project" value="UniProtKB-UniRule"/>
</dbReference>
<dbReference type="GO" id="GO:0051301">
    <property type="term" value="P:cell division"/>
    <property type="evidence" value="ECO:0007669"/>
    <property type="project" value="UniProtKB-KW"/>
</dbReference>
<dbReference type="GO" id="GO:0071555">
    <property type="term" value="P:cell wall organization"/>
    <property type="evidence" value="ECO:0007669"/>
    <property type="project" value="UniProtKB-KW"/>
</dbReference>
<dbReference type="GO" id="GO:0009252">
    <property type="term" value="P:peptidoglycan biosynthetic process"/>
    <property type="evidence" value="ECO:0007669"/>
    <property type="project" value="UniProtKB-UniRule"/>
</dbReference>
<dbReference type="GO" id="GO:0008360">
    <property type="term" value="P:regulation of cell shape"/>
    <property type="evidence" value="ECO:0007669"/>
    <property type="project" value="UniProtKB-KW"/>
</dbReference>
<dbReference type="CDD" id="cd06852">
    <property type="entry name" value="GT_MraY"/>
    <property type="match status" value="1"/>
</dbReference>
<dbReference type="HAMAP" id="MF_00038">
    <property type="entry name" value="MraY"/>
    <property type="match status" value="1"/>
</dbReference>
<dbReference type="InterPro" id="IPR000715">
    <property type="entry name" value="Glycosyl_transferase_4"/>
</dbReference>
<dbReference type="InterPro" id="IPR003524">
    <property type="entry name" value="PNAcMuramoyl-5peptid_Trfase"/>
</dbReference>
<dbReference type="InterPro" id="IPR018480">
    <property type="entry name" value="PNAcMuramoyl-5peptid_Trfase_CS"/>
</dbReference>
<dbReference type="NCBIfam" id="TIGR00445">
    <property type="entry name" value="mraY"/>
    <property type="match status" value="1"/>
</dbReference>
<dbReference type="PANTHER" id="PTHR22926">
    <property type="entry name" value="PHOSPHO-N-ACETYLMURAMOYL-PENTAPEPTIDE-TRANSFERASE"/>
    <property type="match status" value="1"/>
</dbReference>
<dbReference type="PANTHER" id="PTHR22926:SF5">
    <property type="entry name" value="PHOSPHO-N-ACETYLMURAMOYL-PENTAPEPTIDE-TRANSFERASE HOMOLOG"/>
    <property type="match status" value="1"/>
</dbReference>
<dbReference type="Pfam" id="PF00953">
    <property type="entry name" value="Glycos_transf_4"/>
    <property type="match status" value="1"/>
</dbReference>
<dbReference type="Pfam" id="PF10555">
    <property type="entry name" value="MraY_sig1"/>
    <property type="match status" value="1"/>
</dbReference>
<dbReference type="PROSITE" id="PS01347">
    <property type="entry name" value="MRAY_1"/>
    <property type="match status" value="1"/>
</dbReference>
<dbReference type="PROSITE" id="PS01348">
    <property type="entry name" value="MRAY_2"/>
    <property type="match status" value="1"/>
</dbReference>
<sequence length="319" mass="35809">MQFSLIPFISSFALTVIFLPLFIGFMRMKHEGQVIRDEGPKWHEKKSGTPTMGGVVFMLASVISTLWVLIWQKNLNKTTWILIIAFLGYGIIGFLDDGIKLYFKRNLGLKAWQKLLGQIIIAALIIALAFSDHFAFELYIPFAGMVRNSFLFSLFVLFWLVGFSNAVNLSDGLDGLATGLSIIAYATYAWIAYQEKNWVIVAFTLSVIGGLVGFFIFNHKPAKIFMGDAGSLALGGGLATVSIFLHRPWSLLLIGIVFVLETLSVILQVISFQTTGKRIFKMTPIHHHFEMLGWSEWKVDIVFWIVGLIGSIIYLIIWG</sequence>
<feature type="chain" id="PRO_1000002996" description="Phospho-N-acetylmuramoyl-pentapeptide-transferase">
    <location>
        <begin position="1"/>
        <end position="319"/>
    </location>
</feature>
<feature type="transmembrane region" description="Helical" evidence="1">
    <location>
        <begin position="5"/>
        <end position="25"/>
    </location>
</feature>
<feature type="transmembrane region" description="Helical" evidence="1">
    <location>
        <begin position="51"/>
        <end position="71"/>
    </location>
</feature>
<feature type="transmembrane region" description="Helical" evidence="1">
    <location>
        <begin position="79"/>
        <end position="99"/>
    </location>
</feature>
<feature type="transmembrane region" description="Helical" evidence="1">
    <location>
        <begin position="116"/>
        <end position="136"/>
    </location>
</feature>
<feature type="transmembrane region" description="Helical" evidence="1">
    <location>
        <begin position="149"/>
        <end position="169"/>
    </location>
</feature>
<feature type="transmembrane region" description="Helical" evidence="1">
    <location>
        <begin position="172"/>
        <end position="192"/>
    </location>
</feature>
<feature type="transmembrane region" description="Helical" evidence="1">
    <location>
        <begin position="197"/>
        <end position="217"/>
    </location>
</feature>
<feature type="transmembrane region" description="Helical" evidence="1">
    <location>
        <begin position="224"/>
        <end position="244"/>
    </location>
</feature>
<feature type="transmembrane region" description="Helical" evidence="1">
    <location>
        <begin position="252"/>
        <end position="272"/>
    </location>
</feature>
<feature type="transmembrane region" description="Helical" evidence="1">
    <location>
        <begin position="299"/>
        <end position="319"/>
    </location>
</feature>
<gene>
    <name evidence="1" type="primary">mraY</name>
    <name type="ordered locus">LGAS_1206</name>
</gene>
<organism>
    <name type="scientific">Lactobacillus gasseri (strain ATCC 33323 / DSM 20243 / BCRC 14619 / CIP 102991 / JCM 1131 / KCTC 3163 / NCIMB 11718 / NCTC 13722 / AM63)</name>
    <dbReference type="NCBI Taxonomy" id="324831"/>
    <lineage>
        <taxon>Bacteria</taxon>
        <taxon>Bacillati</taxon>
        <taxon>Bacillota</taxon>
        <taxon>Bacilli</taxon>
        <taxon>Lactobacillales</taxon>
        <taxon>Lactobacillaceae</taxon>
        <taxon>Lactobacillus</taxon>
    </lineage>
</organism>
<name>MRAY_LACGA</name>
<protein>
    <recommendedName>
        <fullName evidence="1">Phospho-N-acetylmuramoyl-pentapeptide-transferase</fullName>
        <ecNumber evidence="1">2.7.8.13</ecNumber>
    </recommendedName>
    <alternativeName>
        <fullName evidence="1">UDP-MurNAc-pentapeptide phosphotransferase</fullName>
    </alternativeName>
</protein>
<evidence type="ECO:0000255" key="1">
    <source>
        <dbReference type="HAMAP-Rule" id="MF_00038"/>
    </source>
</evidence>